<dbReference type="EC" id="3.4.24.40"/>
<dbReference type="EMBL" id="M59229">
    <property type="protein sequence ID" value="AAA24860.1"/>
    <property type="molecule type" value="Genomic_DNA"/>
</dbReference>
<dbReference type="EMBL" id="J04736">
    <property type="protein sequence ID" value="AAA24862.1"/>
    <property type="molecule type" value="Genomic_DNA"/>
</dbReference>
<dbReference type="EMBL" id="M60395">
    <property type="protein sequence ID" value="AAA63638.1"/>
    <property type="molecule type" value="Genomic_DNA"/>
</dbReference>
<dbReference type="PIR" id="A38307">
    <property type="entry name" value="A38307"/>
</dbReference>
<dbReference type="PDB" id="1GO7">
    <property type="method" value="X-ray"/>
    <property type="resolution" value="2.10 A"/>
    <property type="chains" value="P=18-479"/>
</dbReference>
<dbReference type="PDB" id="1GO8">
    <property type="method" value="X-ray"/>
    <property type="resolution" value="2.00 A"/>
    <property type="chains" value="P=18-479"/>
</dbReference>
<dbReference type="PDB" id="1K7G">
    <property type="method" value="X-ray"/>
    <property type="resolution" value="2.00 A"/>
    <property type="chains" value="A=1-479"/>
</dbReference>
<dbReference type="PDB" id="1K7I">
    <property type="method" value="X-ray"/>
    <property type="resolution" value="1.59 A"/>
    <property type="chains" value="A=1-479"/>
</dbReference>
<dbReference type="PDB" id="1K7Q">
    <property type="method" value="X-ray"/>
    <property type="resolution" value="1.80 A"/>
    <property type="chains" value="A=1-479"/>
</dbReference>
<dbReference type="PDB" id="3HB2">
    <property type="method" value="X-ray"/>
    <property type="resolution" value="1.75 A"/>
    <property type="chains" value="P=18-479"/>
</dbReference>
<dbReference type="PDB" id="3HBU">
    <property type="method" value="X-ray"/>
    <property type="resolution" value="1.77 A"/>
    <property type="chains" value="P=18-479"/>
</dbReference>
<dbReference type="PDB" id="3HBV">
    <property type="method" value="X-ray"/>
    <property type="resolution" value="1.95 A"/>
    <property type="chains" value="P=18-479"/>
</dbReference>
<dbReference type="PDB" id="3HDA">
    <property type="method" value="X-ray"/>
    <property type="resolution" value="2.13 A"/>
    <property type="chains" value="P=18-479"/>
</dbReference>
<dbReference type="PDBsum" id="1GO7"/>
<dbReference type="PDBsum" id="1GO8"/>
<dbReference type="PDBsum" id="1K7G"/>
<dbReference type="PDBsum" id="1K7I"/>
<dbReference type="PDBsum" id="1K7Q"/>
<dbReference type="PDBsum" id="3HB2"/>
<dbReference type="PDBsum" id="3HBU"/>
<dbReference type="PDBsum" id="3HBV"/>
<dbReference type="PDBsum" id="3HDA"/>
<dbReference type="SMR" id="P16317"/>
<dbReference type="MEROPS" id="M10.054"/>
<dbReference type="EvolutionaryTrace" id="P16317"/>
<dbReference type="GO" id="GO:0031012">
    <property type="term" value="C:extracellular matrix"/>
    <property type="evidence" value="ECO:0007669"/>
    <property type="project" value="InterPro"/>
</dbReference>
<dbReference type="GO" id="GO:0005615">
    <property type="term" value="C:extracellular space"/>
    <property type="evidence" value="ECO:0007669"/>
    <property type="project" value="InterPro"/>
</dbReference>
<dbReference type="GO" id="GO:0005509">
    <property type="term" value="F:calcium ion binding"/>
    <property type="evidence" value="ECO:0007669"/>
    <property type="project" value="InterPro"/>
</dbReference>
<dbReference type="GO" id="GO:0004222">
    <property type="term" value="F:metalloendopeptidase activity"/>
    <property type="evidence" value="ECO:0007669"/>
    <property type="project" value="InterPro"/>
</dbReference>
<dbReference type="GO" id="GO:0008270">
    <property type="term" value="F:zinc ion binding"/>
    <property type="evidence" value="ECO:0007669"/>
    <property type="project" value="InterPro"/>
</dbReference>
<dbReference type="GO" id="GO:0006508">
    <property type="term" value="P:proteolysis"/>
    <property type="evidence" value="ECO:0007669"/>
    <property type="project" value="UniProtKB-KW"/>
</dbReference>
<dbReference type="CDD" id="cd04277">
    <property type="entry name" value="ZnMc_serralysin_like"/>
    <property type="match status" value="1"/>
</dbReference>
<dbReference type="Gene3D" id="3.40.390.10">
    <property type="entry name" value="Collagenase (Catalytic Domain)"/>
    <property type="match status" value="1"/>
</dbReference>
<dbReference type="Gene3D" id="2.150.10.10">
    <property type="entry name" value="Serralysin-like metalloprotease, C-terminal"/>
    <property type="match status" value="1"/>
</dbReference>
<dbReference type="InterPro" id="IPR018511">
    <property type="entry name" value="Hemolysin-typ_Ca-bd_CS"/>
</dbReference>
<dbReference type="InterPro" id="IPR001343">
    <property type="entry name" value="Hemolysn_Ca-bd"/>
</dbReference>
<dbReference type="InterPro" id="IPR024079">
    <property type="entry name" value="MetalloPept_cat_dom_sf"/>
</dbReference>
<dbReference type="InterPro" id="IPR001818">
    <property type="entry name" value="Pept_M10_metallopeptidase"/>
</dbReference>
<dbReference type="InterPro" id="IPR016294">
    <property type="entry name" value="Pept_M10B"/>
</dbReference>
<dbReference type="InterPro" id="IPR013858">
    <property type="entry name" value="Peptidase_M10B_C"/>
</dbReference>
<dbReference type="InterPro" id="IPR006026">
    <property type="entry name" value="Peptidase_Metallo"/>
</dbReference>
<dbReference type="InterPro" id="IPR034033">
    <property type="entry name" value="Serralysin-like"/>
</dbReference>
<dbReference type="InterPro" id="IPR011049">
    <property type="entry name" value="Serralysin-like_metalloprot_C"/>
</dbReference>
<dbReference type="NCBIfam" id="NF035945">
    <property type="entry name" value="Zn_serralysin"/>
    <property type="match status" value="1"/>
</dbReference>
<dbReference type="PANTHER" id="PTHR10201">
    <property type="entry name" value="MATRIX METALLOPROTEINASE"/>
    <property type="match status" value="1"/>
</dbReference>
<dbReference type="PANTHER" id="PTHR10201:SF323">
    <property type="entry name" value="MATRIX METALLOPROTEINASE-21"/>
    <property type="match status" value="1"/>
</dbReference>
<dbReference type="Pfam" id="PF00353">
    <property type="entry name" value="HemolysinCabind"/>
    <property type="match status" value="1"/>
</dbReference>
<dbReference type="Pfam" id="PF00413">
    <property type="entry name" value="Peptidase_M10"/>
    <property type="match status" value="1"/>
</dbReference>
<dbReference type="Pfam" id="PF08548">
    <property type="entry name" value="Peptidase_M10_C"/>
    <property type="match status" value="1"/>
</dbReference>
<dbReference type="PIRSF" id="PIRSF001205">
    <property type="entry name" value="Peptidase_M10B"/>
    <property type="match status" value="1"/>
</dbReference>
<dbReference type="PRINTS" id="PR00313">
    <property type="entry name" value="CABNDNGRPT"/>
</dbReference>
<dbReference type="SMART" id="SM00235">
    <property type="entry name" value="ZnMc"/>
    <property type="match status" value="1"/>
</dbReference>
<dbReference type="SUPFAM" id="SSF51120">
    <property type="entry name" value="beta-Roll"/>
    <property type="match status" value="1"/>
</dbReference>
<dbReference type="SUPFAM" id="SSF55486">
    <property type="entry name" value="Metalloproteases ('zincins'), catalytic domain"/>
    <property type="match status" value="1"/>
</dbReference>
<dbReference type="PROSITE" id="PS00330">
    <property type="entry name" value="HEMOLYSIN_CALCIUM"/>
    <property type="match status" value="1"/>
</dbReference>
<dbReference type="PROSITE" id="PS00142">
    <property type="entry name" value="ZINC_PROTEASE"/>
    <property type="match status" value="1"/>
</dbReference>
<reference key="1">
    <citation type="journal article" date="1990" name="J. Biol. Chem.">
        <title>Protein secretion in Gram-negative bacteria. The extracellular metalloprotease B from Erwinia chrysanthemi contains a C-terminal secretion signal analogous to that of Escherichia coli alpha-hemolysin.</title>
        <authorList>
            <person name="Delepelaire P."/>
            <person name="Wandersman C."/>
        </authorList>
    </citation>
    <scope>NUCLEOTIDE SEQUENCE [GENOMIC DNA]</scope>
    <source>
        <strain>B374</strain>
    </source>
</reference>
<reference key="2">
    <citation type="journal article" date="1989" name="J. Biol. Chem.">
        <title>Protease secretion by Erwinia chrysanthemi. Proteases B and C are synthesized and secreted as zymogens without a signal peptide.</title>
        <authorList>
            <person name="Delepelaire P."/>
            <person name="Wandersman C."/>
        </authorList>
    </citation>
    <scope>NUCLEOTIDE SEQUENCE [GENOMIC DNA] OF 1-59</scope>
    <scope>PARTIAL PROTEIN SEQUENCE</scope>
    <source>
        <strain>B374</strain>
    </source>
</reference>
<evidence type="ECO:0000250" key="1"/>
<evidence type="ECO:0000255" key="2">
    <source>
        <dbReference type="PROSITE-ProRule" id="PRU10095"/>
    </source>
</evidence>
<evidence type="ECO:0000305" key="3"/>
<evidence type="ECO:0007829" key="4">
    <source>
        <dbReference type="PDB" id="1K7I"/>
    </source>
</evidence>
<evidence type="ECO:0007829" key="5">
    <source>
        <dbReference type="PDB" id="3HB2"/>
    </source>
</evidence>
<accession>P16317</accession>
<protein>
    <recommendedName>
        <fullName>Serralysin C</fullName>
        <ecNumber>3.4.24.40</ecNumber>
    </recommendedName>
    <alternativeName>
        <fullName>Secreted protease C</fullName>
        <shortName>ProC</shortName>
    </alternativeName>
</protein>
<feature type="propeptide" id="PRO_0000028689">
    <location>
        <begin position="1"/>
        <end position="17"/>
    </location>
</feature>
<feature type="chain" id="PRO_0000028690" description="Serralysin C">
    <location>
        <begin position="18"/>
        <end position="479"/>
    </location>
</feature>
<feature type="repeat" description="Hemolysin-type calcium-binding 1">
    <location>
        <begin position="344"/>
        <end position="361"/>
    </location>
</feature>
<feature type="repeat" description="Hemolysin-type calcium-binding 2">
    <location>
        <begin position="362"/>
        <end position="379"/>
    </location>
</feature>
<feature type="repeat" description="Hemolysin-type calcium-binding 3">
    <location>
        <begin position="380"/>
        <end position="397"/>
    </location>
</feature>
<feature type="active site" evidence="2">
    <location>
        <position position="189"/>
    </location>
</feature>
<feature type="binding site" evidence="2">
    <location>
        <position position="188"/>
    </location>
    <ligand>
        <name>Zn(2+)</name>
        <dbReference type="ChEBI" id="CHEBI:29105"/>
        <note>catalytic</note>
    </ligand>
</feature>
<feature type="binding site" evidence="2">
    <location>
        <position position="192"/>
    </location>
    <ligand>
        <name>Zn(2+)</name>
        <dbReference type="ChEBI" id="CHEBI:29105"/>
        <note>catalytic</note>
    </ligand>
</feature>
<feature type="binding site" evidence="2">
    <location>
        <position position="228"/>
    </location>
    <ligand>
        <name>Zn(2+)</name>
        <dbReference type="ChEBI" id="CHEBI:29105"/>
        <note>catalytic</note>
    </ligand>
</feature>
<feature type="binding site" evidence="1">
    <location>
        <position position="265"/>
    </location>
    <ligand>
        <name>Ca(2+)</name>
        <dbReference type="ChEBI" id="CHEBI:29108"/>
        <label>1</label>
    </ligand>
</feature>
<feature type="binding site" evidence="1">
    <location>
        <position position="267"/>
    </location>
    <ligand>
        <name>Ca(2+)</name>
        <dbReference type="ChEBI" id="CHEBI:29108"/>
        <label>1</label>
    </ligand>
</feature>
<feature type="binding site" evidence="1">
    <location>
        <position position="297"/>
    </location>
    <ligand>
        <name>Ca(2+)</name>
        <dbReference type="ChEBI" id="CHEBI:29108"/>
        <label>1</label>
    </ligand>
</feature>
<feature type="binding site" evidence="1">
    <location>
        <position position="299"/>
    </location>
    <ligand>
        <name>Ca(2+)</name>
        <dbReference type="ChEBI" id="CHEBI:29108"/>
        <label>1</label>
    </ligand>
</feature>
<feature type="binding site" evidence="1">
    <location>
        <position position="300"/>
    </location>
    <ligand>
        <name>Ca(2+)</name>
        <dbReference type="ChEBI" id="CHEBI:29108"/>
        <label>2</label>
    </ligand>
</feature>
<feature type="binding site" evidence="1">
    <location>
        <position position="302"/>
    </location>
    <ligand>
        <name>Ca(2+)</name>
        <dbReference type="ChEBI" id="CHEBI:29108"/>
        <label>1</label>
    </ligand>
</feature>
<feature type="binding site" evidence="1">
    <location>
        <position position="302"/>
    </location>
    <ligand>
        <name>Ca(2+)</name>
        <dbReference type="ChEBI" id="CHEBI:29108"/>
        <label>2</label>
    </ligand>
</feature>
<feature type="binding site" evidence="1">
    <location>
        <position position="339"/>
    </location>
    <ligand>
        <name>Ca(2+)</name>
        <dbReference type="ChEBI" id="CHEBI:29108"/>
        <label>2</label>
    </ligand>
</feature>
<feature type="binding site" evidence="1">
    <location>
        <position position="341"/>
    </location>
    <ligand>
        <name>Ca(2+)</name>
        <dbReference type="ChEBI" id="CHEBI:29108"/>
        <label>2</label>
    </ligand>
</feature>
<feature type="binding site" evidence="1">
    <location>
        <position position="346"/>
    </location>
    <ligand>
        <name>Ca(2+)</name>
        <dbReference type="ChEBI" id="CHEBI:29108"/>
        <label>3</label>
    </ligand>
</feature>
<feature type="binding site" evidence="1">
    <location>
        <position position="348"/>
    </location>
    <ligand>
        <name>Ca(2+)</name>
        <dbReference type="ChEBI" id="CHEBI:29108"/>
        <label>3</label>
    </ligand>
</feature>
<feature type="binding site" evidence="1">
    <location>
        <position position="350"/>
    </location>
    <ligand>
        <name>Ca(2+)</name>
        <dbReference type="ChEBI" id="CHEBI:29108"/>
        <label>3</label>
    </ligand>
</feature>
<feature type="binding site" evidence="1">
    <location>
        <position position="355"/>
    </location>
    <ligand>
        <name>Ca(2+)</name>
        <dbReference type="ChEBI" id="CHEBI:29108"/>
        <label>4</label>
    </ligand>
</feature>
<feature type="binding site" evidence="1">
    <location>
        <position position="357"/>
    </location>
    <ligand>
        <name>Ca(2+)</name>
        <dbReference type="ChEBI" id="CHEBI:29108"/>
        <label>4</label>
    </ligand>
</feature>
<feature type="binding site" evidence="1">
    <location>
        <position position="359"/>
    </location>
    <ligand>
        <name>Ca(2+)</name>
        <dbReference type="ChEBI" id="CHEBI:29108"/>
        <label>4</label>
    </ligand>
</feature>
<feature type="binding site" evidence="1">
    <location>
        <position position="363"/>
    </location>
    <ligand>
        <name>Ca(2+)</name>
        <dbReference type="ChEBI" id="CHEBI:29108"/>
        <label>3</label>
    </ligand>
</feature>
<feature type="binding site" evidence="1">
    <location>
        <position position="364"/>
    </location>
    <ligand>
        <name>Ca(2+)</name>
        <dbReference type="ChEBI" id="CHEBI:29108"/>
        <label>5</label>
    </ligand>
</feature>
<feature type="binding site" evidence="1">
    <location>
        <position position="365"/>
    </location>
    <ligand>
        <name>Ca(2+)</name>
        <dbReference type="ChEBI" id="CHEBI:29108"/>
        <label>3</label>
    </ligand>
</feature>
<feature type="binding site" evidence="1">
    <location>
        <position position="366"/>
    </location>
    <ligand>
        <name>Ca(2+)</name>
        <dbReference type="ChEBI" id="CHEBI:29108"/>
        <label>5</label>
    </ligand>
</feature>
<feature type="binding site" evidence="1">
    <location>
        <position position="368"/>
    </location>
    <ligand>
        <name>Ca(2+)</name>
        <dbReference type="ChEBI" id="CHEBI:29108"/>
        <label>3</label>
    </ligand>
</feature>
<feature type="binding site" evidence="1">
    <location>
        <position position="368"/>
    </location>
    <ligand>
        <name>Ca(2+)</name>
        <dbReference type="ChEBI" id="CHEBI:29108"/>
        <label>5</label>
    </ligand>
</feature>
<feature type="binding site" evidence="1">
    <location>
        <position position="372"/>
    </location>
    <ligand>
        <name>Ca(2+)</name>
        <dbReference type="ChEBI" id="CHEBI:29108"/>
        <label>4</label>
    </ligand>
</feature>
<feature type="binding site" evidence="1">
    <location>
        <position position="373"/>
    </location>
    <ligand>
        <name>Ca(2+)</name>
        <dbReference type="ChEBI" id="CHEBI:29108"/>
        <label>6</label>
    </ligand>
</feature>
<feature type="binding site" evidence="1">
    <location>
        <position position="375"/>
    </location>
    <ligand>
        <name>Ca(2+)</name>
        <dbReference type="ChEBI" id="CHEBI:29108"/>
        <label>6</label>
    </ligand>
</feature>
<feature type="binding site" evidence="1">
    <location>
        <position position="377"/>
    </location>
    <ligand>
        <name>Ca(2+)</name>
        <dbReference type="ChEBI" id="CHEBI:29108"/>
        <label>4</label>
    </ligand>
</feature>
<feature type="binding site" evidence="1">
    <location>
        <position position="377"/>
    </location>
    <ligand>
        <name>Ca(2+)</name>
        <dbReference type="ChEBI" id="CHEBI:29108"/>
        <label>6</label>
    </ligand>
</feature>
<feature type="binding site" evidence="1">
    <location>
        <position position="381"/>
    </location>
    <ligand>
        <name>Ca(2+)</name>
        <dbReference type="ChEBI" id="CHEBI:29108"/>
        <label>5</label>
    </ligand>
</feature>
<feature type="binding site" evidence="1">
    <location>
        <position position="382"/>
    </location>
    <ligand>
        <name>Ca(2+)</name>
        <dbReference type="ChEBI" id="CHEBI:29108"/>
        <label>7</label>
    </ligand>
</feature>
<feature type="binding site" evidence="1">
    <location>
        <position position="383"/>
    </location>
    <ligand>
        <name>Ca(2+)</name>
        <dbReference type="ChEBI" id="CHEBI:29108"/>
        <label>5</label>
    </ligand>
</feature>
<feature type="binding site" evidence="1">
    <location>
        <position position="384"/>
    </location>
    <ligand>
        <name>Ca(2+)</name>
        <dbReference type="ChEBI" id="CHEBI:29108"/>
        <label>7</label>
    </ligand>
</feature>
<feature type="binding site" evidence="1">
    <location>
        <position position="386"/>
    </location>
    <ligand>
        <name>Ca(2+)</name>
        <dbReference type="ChEBI" id="CHEBI:29108"/>
        <label>5</label>
    </ligand>
</feature>
<feature type="binding site" evidence="1">
    <location>
        <position position="386"/>
    </location>
    <ligand>
        <name>Ca(2+)</name>
        <dbReference type="ChEBI" id="CHEBI:29108"/>
        <label>7</label>
    </ligand>
</feature>
<feature type="binding site" evidence="1">
    <location>
        <position position="395"/>
    </location>
    <ligand>
        <name>Ca(2+)</name>
        <dbReference type="ChEBI" id="CHEBI:29108"/>
        <label>6</label>
    </ligand>
</feature>
<feature type="binding site" evidence="1">
    <location>
        <position position="402"/>
    </location>
    <ligand>
        <name>Ca(2+)</name>
        <dbReference type="ChEBI" id="CHEBI:29108"/>
        <label>6</label>
    </ligand>
</feature>
<feature type="binding site" evidence="1">
    <location>
        <position position="412"/>
    </location>
    <ligand>
        <name>Ca(2+)</name>
        <dbReference type="ChEBI" id="CHEBI:29108"/>
        <label>7</label>
    </ligand>
</feature>
<feature type="helix" evidence="4">
    <location>
        <begin position="22"/>
        <end position="30"/>
    </location>
</feature>
<feature type="turn" evidence="4">
    <location>
        <begin position="31"/>
        <end position="34"/>
    </location>
</feature>
<feature type="helix" evidence="4">
    <location>
        <begin position="50"/>
        <end position="57"/>
    </location>
</feature>
<feature type="turn" evidence="4">
    <location>
        <begin position="58"/>
        <end position="60"/>
    </location>
</feature>
<feature type="strand" evidence="4">
    <location>
        <begin position="66"/>
        <end position="68"/>
    </location>
</feature>
<feature type="strand" evidence="4">
    <location>
        <begin position="74"/>
        <end position="80"/>
    </location>
</feature>
<feature type="helix" evidence="4">
    <location>
        <begin position="99"/>
        <end position="113"/>
    </location>
</feature>
<feature type="strand" evidence="4">
    <location>
        <begin position="116"/>
        <end position="122"/>
    </location>
</feature>
<feature type="strand" evidence="4">
    <location>
        <begin position="130"/>
        <end position="136"/>
    </location>
</feature>
<feature type="strand" evidence="4">
    <location>
        <begin position="150"/>
        <end position="152"/>
    </location>
</feature>
<feature type="strand" evidence="4">
    <location>
        <begin position="155"/>
        <end position="158"/>
    </location>
</feature>
<feature type="turn" evidence="4">
    <location>
        <begin position="159"/>
        <end position="162"/>
    </location>
</feature>
<feature type="strand" evidence="4">
    <location>
        <begin position="163"/>
        <end position="167"/>
    </location>
</feature>
<feature type="helix" evidence="4">
    <location>
        <begin position="171"/>
        <end position="174"/>
    </location>
</feature>
<feature type="turn" evidence="4">
    <location>
        <begin position="176"/>
        <end position="178"/>
    </location>
</feature>
<feature type="helix" evidence="4">
    <location>
        <begin position="180"/>
        <end position="193"/>
    </location>
</feature>
<feature type="strand" evidence="4">
    <location>
        <begin position="199"/>
        <end position="201"/>
    </location>
</feature>
<feature type="strand" evidence="4">
    <location>
        <begin position="204"/>
        <end position="207"/>
    </location>
</feature>
<feature type="helix" evidence="4">
    <location>
        <begin position="211"/>
        <end position="213"/>
    </location>
</feature>
<feature type="turn" evidence="4">
    <location>
        <begin position="221"/>
        <end position="223"/>
    </location>
</feature>
<feature type="strand" evidence="5">
    <location>
        <begin position="227"/>
        <end position="229"/>
    </location>
</feature>
<feature type="helix" evidence="4">
    <location>
        <begin position="231"/>
        <end position="234"/>
    </location>
</feature>
<feature type="helix" evidence="4">
    <location>
        <begin position="248"/>
        <end position="258"/>
    </location>
</feature>
<feature type="turn" evidence="4">
    <location>
        <begin position="262"/>
        <end position="265"/>
    </location>
</feature>
<feature type="strand" evidence="4">
    <location>
        <begin position="270"/>
        <end position="272"/>
    </location>
</feature>
<feature type="helix" evidence="4">
    <location>
        <begin position="280"/>
        <end position="282"/>
    </location>
</feature>
<feature type="strand" evidence="4">
    <location>
        <begin position="293"/>
        <end position="295"/>
    </location>
</feature>
<feature type="strand" evidence="4">
    <location>
        <begin position="303"/>
        <end position="305"/>
    </location>
</feature>
<feature type="strand" evidence="4">
    <location>
        <begin position="314"/>
        <end position="316"/>
    </location>
</feature>
<feature type="strand" evidence="4">
    <location>
        <begin position="322"/>
        <end position="324"/>
    </location>
</feature>
<feature type="strand" evidence="4">
    <location>
        <begin position="332"/>
        <end position="334"/>
    </location>
</feature>
<feature type="strand" evidence="4">
    <location>
        <begin position="342"/>
        <end position="344"/>
    </location>
</feature>
<feature type="strand" evidence="4">
    <location>
        <begin position="351"/>
        <end position="353"/>
    </location>
</feature>
<feature type="strand" evidence="4">
    <location>
        <begin position="360"/>
        <end position="362"/>
    </location>
</feature>
<feature type="strand" evidence="4">
    <location>
        <begin position="369"/>
        <end position="371"/>
    </location>
</feature>
<feature type="strand" evidence="4">
    <location>
        <begin position="378"/>
        <end position="380"/>
    </location>
</feature>
<feature type="strand" evidence="4">
    <location>
        <begin position="387"/>
        <end position="389"/>
    </location>
</feature>
<feature type="helix" evidence="4">
    <location>
        <begin position="393"/>
        <end position="395"/>
    </location>
</feature>
<feature type="helix" evidence="4">
    <location>
        <begin position="398"/>
        <end position="400"/>
    </location>
</feature>
<feature type="strand" evidence="4">
    <location>
        <begin position="402"/>
        <end position="404"/>
    </location>
</feature>
<feature type="turn" evidence="4">
    <location>
        <begin position="409"/>
        <end position="411"/>
    </location>
</feature>
<feature type="strand" evidence="4">
    <location>
        <begin position="413"/>
        <end position="415"/>
    </location>
</feature>
<feature type="helix" evidence="4">
    <location>
        <begin position="417"/>
        <end position="422"/>
    </location>
</feature>
<feature type="strand" evidence="4">
    <location>
        <begin position="434"/>
        <end position="436"/>
    </location>
</feature>
<feature type="strand" evidence="4">
    <location>
        <begin position="438"/>
        <end position="444"/>
    </location>
</feature>
<feature type="turn" evidence="4">
    <location>
        <begin position="445"/>
        <end position="448"/>
    </location>
</feature>
<feature type="strand" evidence="4">
    <location>
        <begin position="449"/>
        <end position="455"/>
    </location>
</feature>
<feature type="strand" evidence="4">
    <location>
        <begin position="464"/>
        <end position="470"/>
    </location>
</feature>
<feature type="helix" evidence="4">
    <location>
        <begin position="474"/>
        <end position="476"/>
    </location>
</feature>
<proteinExistence type="evidence at protein level"/>
<name>PRTC_DICCH</name>
<organism>
    <name type="scientific">Dickeya chrysanthemi</name>
    <name type="common">Pectobacterium chrysanthemi</name>
    <name type="synonym">Erwinia chrysanthemi</name>
    <dbReference type="NCBI Taxonomy" id="556"/>
    <lineage>
        <taxon>Bacteria</taxon>
        <taxon>Pseudomonadati</taxon>
        <taxon>Pseudomonadota</taxon>
        <taxon>Gammaproteobacteria</taxon>
        <taxon>Enterobacterales</taxon>
        <taxon>Pectobacteriaceae</taxon>
        <taxon>Dickeya</taxon>
    </lineage>
</organism>
<comment type="catalytic activity">
    <reaction>
        <text>Preferential cleavage of bonds with hydrophobic residues in P1'.</text>
        <dbReference type="EC" id="3.4.24.40"/>
    </reaction>
</comment>
<comment type="cofactor">
    <cofactor evidence="1">
        <name>Ca(2+)</name>
        <dbReference type="ChEBI" id="CHEBI:29108"/>
    </cofactor>
    <text evidence="1">Binds 7 Ca(2+) ions per subunit.</text>
</comment>
<comment type="cofactor">
    <cofactor evidence="1">
        <name>Zn(2+)</name>
        <dbReference type="ChEBI" id="CHEBI:29105"/>
    </cofactor>
    <text evidence="1">Binds 1 zinc ion per subunit.</text>
</comment>
<comment type="subcellular location">
    <subcellularLocation>
        <location>Secreted</location>
    </subcellularLocation>
</comment>
<comment type="domain">
    <text>The Gly-rich repeats may be important in the extracellular secretion of this metalloprotease.</text>
</comment>
<comment type="similarity">
    <text evidence="3">Belongs to the peptidase M10B family.</text>
</comment>
<gene>
    <name type="primary">prtC</name>
</gene>
<sequence>MGKNLSLRQDDAQHALSANTSSAYNSVYDFLRYHDRGDGLTVNGKTSYSIDQAAAQITRENVSWNGTNVFGKSANLTFKFLQSVSSIPSGDTGFVKFNAEQIEQAKLSLQSWSDVANLTFTEVTGNKSANITFGNYTRDASGNLDYGTQAYAYYPGNYQGAGSSWYNYNQSNIRNPGSEEYGRQTFTHEIGHALGLAHPGEYNAGEGDPSYNDAVYAEDSYQFSIMSYWGENETGADYNGHYGGAPMIDDIAAIQRLYGANMTTRTGDSVYGFNSNTDRDFYTATDSSKALIFSVWDAGGTDTFDFSGYSNNQRINLNEGSFSDVGGLKGNVSIAHGVTIENAIGGSGNDILVGNSADNILQGGAGNDVLYGGAGADTLYGGAGRDTFVYGSGQDSTVAAYDWIADFQKGIDKIDLSAFRNEGQLSFVQDQFTGKGQEVMLQWDAANSITNLWLHEAGHSSVDFLVRIVGQAAQSDIIV</sequence>
<keyword id="KW-0002">3D-structure</keyword>
<keyword id="KW-0106">Calcium</keyword>
<keyword id="KW-0903">Direct protein sequencing</keyword>
<keyword id="KW-0378">Hydrolase</keyword>
<keyword id="KW-0479">Metal-binding</keyword>
<keyword id="KW-0482">Metalloprotease</keyword>
<keyword id="KW-0645">Protease</keyword>
<keyword id="KW-0677">Repeat</keyword>
<keyword id="KW-0964">Secreted</keyword>
<keyword id="KW-0862">Zinc</keyword>
<keyword id="KW-0865">Zymogen</keyword>